<dbReference type="EC" id="1.1.1.17" evidence="1"/>
<dbReference type="EMBL" id="BA000004">
    <property type="protein sequence ID" value="BAB07570.1"/>
    <property type="molecule type" value="Genomic_DNA"/>
</dbReference>
<dbReference type="PIR" id="C84131">
    <property type="entry name" value="C84131"/>
</dbReference>
<dbReference type="RefSeq" id="WP_010899976.1">
    <property type="nucleotide sequence ID" value="NC_002570.2"/>
</dbReference>
<dbReference type="SMR" id="Q9K681"/>
<dbReference type="STRING" id="272558.gene:10729764"/>
<dbReference type="KEGG" id="bha:BH3851"/>
<dbReference type="eggNOG" id="COG0246">
    <property type="taxonomic scope" value="Bacteria"/>
</dbReference>
<dbReference type="HOGENOM" id="CLU_036089_2_0_9"/>
<dbReference type="OrthoDB" id="271711at2"/>
<dbReference type="Proteomes" id="UP000001258">
    <property type="component" value="Chromosome"/>
</dbReference>
<dbReference type="GO" id="GO:0005829">
    <property type="term" value="C:cytosol"/>
    <property type="evidence" value="ECO:0007669"/>
    <property type="project" value="TreeGrafter"/>
</dbReference>
<dbReference type="GO" id="GO:0008926">
    <property type="term" value="F:mannitol-1-phosphate 5-dehydrogenase activity"/>
    <property type="evidence" value="ECO:0007669"/>
    <property type="project" value="UniProtKB-UniRule"/>
</dbReference>
<dbReference type="GO" id="GO:0019592">
    <property type="term" value="P:mannitol catabolic process"/>
    <property type="evidence" value="ECO:0007669"/>
    <property type="project" value="TreeGrafter"/>
</dbReference>
<dbReference type="Gene3D" id="1.10.1040.10">
    <property type="entry name" value="N-(1-d-carboxylethyl)-l-norvaline Dehydrogenase, domain 2"/>
    <property type="match status" value="1"/>
</dbReference>
<dbReference type="Gene3D" id="3.40.50.720">
    <property type="entry name" value="NAD(P)-binding Rossmann-like Domain"/>
    <property type="match status" value="1"/>
</dbReference>
<dbReference type="HAMAP" id="MF_00196">
    <property type="entry name" value="Mannitol_dehydrog"/>
    <property type="match status" value="1"/>
</dbReference>
<dbReference type="InterPro" id="IPR008927">
    <property type="entry name" value="6-PGluconate_DH-like_C_sf"/>
</dbReference>
<dbReference type="InterPro" id="IPR013328">
    <property type="entry name" value="6PGD_dom2"/>
</dbReference>
<dbReference type="InterPro" id="IPR023028">
    <property type="entry name" value="Mannitol_1_phos_5_DH"/>
</dbReference>
<dbReference type="InterPro" id="IPR000669">
    <property type="entry name" value="Mannitol_DH"/>
</dbReference>
<dbReference type="InterPro" id="IPR013118">
    <property type="entry name" value="Mannitol_DH_C"/>
</dbReference>
<dbReference type="InterPro" id="IPR013131">
    <property type="entry name" value="Mannitol_DH_N"/>
</dbReference>
<dbReference type="InterPro" id="IPR036291">
    <property type="entry name" value="NAD(P)-bd_dom_sf"/>
</dbReference>
<dbReference type="NCBIfam" id="NF002646">
    <property type="entry name" value="PRK02318.1-2"/>
    <property type="match status" value="1"/>
</dbReference>
<dbReference type="NCBIfam" id="NF002647">
    <property type="entry name" value="PRK02318.1-3"/>
    <property type="match status" value="1"/>
</dbReference>
<dbReference type="NCBIfam" id="NF002649">
    <property type="entry name" value="PRK02318.2-1"/>
    <property type="match status" value="1"/>
</dbReference>
<dbReference type="NCBIfam" id="NF002652">
    <property type="entry name" value="PRK02318.2-5"/>
    <property type="match status" value="1"/>
</dbReference>
<dbReference type="PANTHER" id="PTHR30524:SF0">
    <property type="entry name" value="ALTRONATE OXIDOREDUCTASE-RELATED"/>
    <property type="match status" value="1"/>
</dbReference>
<dbReference type="PANTHER" id="PTHR30524">
    <property type="entry name" value="MANNITOL-1-PHOSPHATE 5-DEHYDROGENASE"/>
    <property type="match status" value="1"/>
</dbReference>
<dbReference type="Pfam" id="PF01232">
    <property type="entry name" value="Mannitol_dh"/>
    <property type="match status" value="1"/>
</dbReference>
<dbReference type="Pfam" id="PF08125">
    <property type="entry name" value="Mannitol_dh_C"/>
    <property type="match status" value="1"/>
</dbReference>
<dbReference type="PRINTS" id="PR00084">
    <property type="entry name" value="MTLDHDRGNASE"/>
</dbReference>
<dbReference type="SUPFAM" id="SSF48179">
    <property type="entry name" value="6-phosphogluconate dehydrogenase C-terminal domain-like"/>
    <property type="match status" value="1"/>
</dbReference>
<dbReference type="SUPFAM" id="SSF51735">
    <property type="entry name" value="NAD(P)-binding Rossmann-fold domains"/>
    <property type="match status" value="1"/>
</dbReference>
<accession>Q9K681</accession>
<feature type="chain" id="PRO_0000170696" description="Mannitol-1-phosphate 5-dehydrogenase">
    <location>
        <begin position="1"/>
        <end position="374"/>
    </location>
</feature>
<feature type="binding site" evidence="1">
    <location>
        <begin position="3"/>
        <end position="14"/>
    </location>
    <ligand>
        <name>NAD(+)</name>
        <dbReference type="ChEBI" id="CHEBI:57540"/>
    </ligand>
</feature>
<reference key="1">
    <citation type="journal article" date="2000" name="Nucleic Acids Res.">
        <title>Complete genome sequence of the alkaliphilic bacterium Bacillus halodurans and genomic sequence comparison with Bacillus subtilis.</title>
        <authorList>
            <person name="Takami H."/>
            <person name="Nakasone K."/>
            <person name="Takaki Y."/>
            <person name="Maeno G."/>
            <person name="Sasaki R."/>
            <person name="Masui N."/>
            <person name="Fuji F."/>
            <person name="Hirama C."/>
            <person name="Nakamura Y."/>
            <person name="Ogasawara N."/>
            <person name="Kuhara S."/>
            <person name="Horikoshi K."/>
        </authorList>
    </citation>
    <scope>NUCLEOTIDE SEQUENCE [LARGE SCALE GENOMIC DNA]</scope>
    <source>
        <strain>ATCC BAA-125 / DSM 18197 / FERM 7344 / JCM 9153 / C-125</strain>
    </source>
</reference>
<proteinExistence type="inferred from homology"/>
<protein>
    <recommendedName>
        <fullName evidence="1">Mannitol-1-phosphate 5-dehydrogenase</fullName>
        <ecNumber evidence="1">1.1.1.17</ecNumber>
    </recommendedName>
</protein>
<comment type="catalytic activity">
    <reaction evidence="1">
        <text>D-mannitol 1-phosphate + NAD(+) = beta-D-fructose 6-phosphate + NADH + H(+)</text>
        <dbReference type="Rhea" id="RHEA:19661"/>
        <dbReference type="ChEBI" id="CHEBI:15378"/>
        <dbReference type="ChEBI" id="CHEBI:57540"/>
        <dbReference type="ChEBI" id="CHEBI:57634"/>
        <dbReference type="ChEBI" id="CHEBI:57945"/>
        <dbReference type="ChEBI" id="CHEBI:61381"/>
        <dbReference type="EC" id="1.1.1.17"/>
    </reaction>
</comment>
<comment type="similarity">
    <text evidence="1">Belongs to the mannitol dehydrogenase family.</text>
</comment>
<evidence type="ECO:0000255" key="1">
    <source>
        <dbReference type="HAMAP-Rule" id="MF_00196"/>
    </source>
</evidence>
<organism>
    <name type="scientific">Halalkalibacterium halodurans (strain ATCC BAA-125 / DSM 18197 / FERM 7344 / JCM 9153 / C-125)</name>
    <name type="common">Bacillus halodurans</name>
    <dbReference type="NCBI Taxonomy" id="272558"/>
    <lineage>
        <taxon>Bacteria</taxon>
        <taxon>Bacillati</taxon>
        <taxon>Bacillota</taxon>
        <taxon>Bacilli</taxon>
        <taxon>Bacillales</taxon>
        <taxon>Bacillaceae</taxon>
        <taxon>Halalkalibacterium (ex Joshi et al. 2022)</taxon>
    </lineage>
</organism>
<sequence>MKAIHFGAGNIGRGFIGALLSKANYEVVFVDVNAQVIDRLNEQRSYTVLTADEDNEENVIHNVRGLNSRTQMEQVLAEIATADLVTTAVGPSVLPHLAHPIGQGLLQRNGAPIQVIACENAIGASSMLQEYTKASLSEEEWSKVDRVTGFPNATVDRIVPAQDHADPLTVSVEPFYEWVIETKSMKGEPPTIDGVTYVEDLTPYIERKLFTVNTGHAMVAYLGFQKGLMTIKEAISDQTIAEKTRQALAETKGLLVHKYNFSPEAHDEYIEKIFKRYNNPYLSDRVERVGRNPIRKLGYNERLVKPARQLLDLGHQPTALLAGIQAAFAFFVEDDQESMELQEKRQVQGLEQTVVEVTGLPAVHPLVQMIVGNN</sequence>
<name>MTLD_HALH5</name>
<keyword id="KW-0520">NAD</keyword>
<keyword id="KW-0560">Oxidoreductase</keyword>
<keyword id="KW-1185">Reference proteome</keyword>
<gene>
    <name evidence="1" type="primary">mtlD</name>
    <name type="ordered locus">BH3851</name>
</gene>